<organismHost>
    <name type="scientific">Homo sapiens</name>
    <name type="common">Human</name>
    <dbReference type="NCBI Taxonomy" id="9606"/>
</organismHost>
<feature type="chain" id="PRO_0000133623" description="Minor capsid protein L2">
    <location>
        <begin position="1"/>
        <end position="465"/>
    </location>
</feature>
<feature type="short sequence motif" description="Nuclear localization signal" evidence="1">
    <location>
        <begin position="1"/>
        <end position="11"/>
    </location>
</feature>
<feature type="short sequence motif" description="Nuclear localization signal" evidence="1">
    <location>
        <begin position="446"/>
        <end position="454"/>
    </location>
</feature>
<feature type="disulfide bond" evidence="1">
    <location>
        <begin position="20"/>
        <end position="26"/>
    </location>
</feature>
<protein>
    <recommendedName>
        <fullName evidence="1">Minor capsid protein L2</fullName>
    </recommendedName>
</protein>
<keyword id="KW-0167">Capsid protein</keyword>
<keyword id="KW-1176">Cytoplasmic inwards viral transport</keyword>
<keyword id="KW-1015">Disulfide bond</keyword>
<keyword id="KW-0238">DNA-binding</keyword>
<keyword id="KW-1039">Host endosome</keyword>
<keyword id="KW-1040">Host Golgi apparatus</keyword>
<keyword id="KW-1048">Host nucleus</keyword>
<keyword id="KW-0945">Host-virus interaction</keyword>
<keyword id="KW-0426">Late protein</keyword>
<keyword id="KW-1177">Microtubular inwards viral transport</keyword>
<keyword id="KW-0597">Phosphoprotein</keyword>
<keyword id="KW-1163">Viral penetration into host nucleus</keyword>
<keyword id="KW-0946">Virion</keyword>
<keyword id="KW-1160">Virus entry into host cell</keyword>
<accession>P22164</accession>
<name>VL2_HPV57</name>
<dbReference type="EMBL" id="X55965">
    <property type="protein sequence ID" value="CAA39435.1"/>
    <property type="molecule type" value="Genomic_DNA"/>
</dbReference>
<dbReference type="PIR" id="S15626">
    <property type="entry name" value="S15626"/>
</dbReference>
<dbReference type="Proteomes" id="UP000007667">
    <property type="component" value="Genome"/>
</dbReference>
<dbReference type="GO" id="GO:0043657">
    <property type="term" value="C:host cell"/>
    <property type="evidence" value="ECO:0007669"/>
    <property type="project" value="GOC"/>
</dbReference>
<dbReference type="GO" id="GO:0044174">
    <property type="term" value="C:host cell endosome"/>
    <property type="evidence" value="ECO:0007669"/>
    <property type="project" value="UniProtKB-KW"/>
</dbReference>
<dbReference type="GO" id="GO:0044177">
    <property type="term" value="C:host cell Golgi apparatus"/>
    <property type="evidence" value="ECO:0007669"/>
    <property type="project" value="UniProtKB-SubCell"/>
</dbReference>
<dbReference type="GO" id="GO:0042025">
    <property type="term" value="C:host cell nucleus"/>
    <property type="evidence" value="ECO:0007669"/>
    <property type="project" value="UniProtKB-SubCell"/>
</dbReference>
<dbReference type="GO" id="GO:0019028">
    <property type="term" value="C:viral capsid"/>
    <property type="evidence" value="ECO:0007669"/>
    <property type="project" value="UniProtKB-UniRule"/>
</dbReference>
<dbReference type="GO" id="GO:0003677">
    <property type="term" value="F:DNA binding"/>
    <property type="evidence" value="ECO:0007669"/>
    <property type="project" value="UniProtKB-UniRule"/>
</dbReference>
<dbReference type="GO" id="GO:0005198">
    <property type="term" value="F:structural molecule activity"/>
    <property type="evidence" value="ECO:0007669"/>
    <property type="project" value="UniProtKB-UniRule"/>
</dbReference>
<dbReference type="GO" id="GO:0075521">
    <property type="term" value="P:microtubule-dependent intracellular transport of viral material towards nucleus"/>
    <property type="evidence" value="ECO:0007669"/>
    <property type="project" value="UniProtKB-UniRule"/>
</dbReference>
<dbReference type="GO" id="GO:0046718">
    <property type="term" value="P:symbiont entry into host cell"/>
    <property type="evidence" value="ECO:0007669"/>
    <property type="project" value="UniProtKB-KW"/>
</dbReference>
<dbReference type="GO" id="GO:0075732">
    <property type="term" value="P:viral penetration into host nucleus"/>
    <property type="evidence" value="ECO:0007669"/>
    <property type="project" value="UniProtKB-KW"/>
</dbReference>
<dbReference type="HAMAP" id="MF_04003">
    <property type="entry name" value="PPV_L2"/>
    <property type="match status" value="1"/>
</dbReference>
<dbReference type="InterPro" id="IPR000784">
    <property type="entry name" value="Late_L2"/>
</dbReference>
<dbReference type="Pfam" id="PF00513">
    <property type="entry name" value="Late_protein_L2"/>
    <property type="match status" value="1"/>
</dbReference>
<evidence type="ECO:0000255" key="1">
    <source>
        <dbReference type="HAMAP-Rule" id="MF_04003"/>
    </source>
</evidence>
<sequence length="465" mass="49282">MSPRAKRRKRASPTDLYRTCKQAGTCPPDIIPRVEQDTLADRILKWGSLGVFFGGLGIGTGSGTGGRTGYIPVGTRPTTVVDVGLAPRPPVVIEPVGASEPSIVNLVEDSSIINAGSSHPTFTGTGGFEVTTSTVTDPAVLDITPSGNGVQVSSSSFVNPLFTDPAIIEAPQAGEVTGHVLVSTATSGSHGFEEIPMQTFATSGGDGGEPISSTPVPGVRRVAGPRLYSRANQQVRVRDPAFIDRPADLVTFDNPVYDPEETIIFQHPGLHEPPDPDFLDIVSLHRPALTSTRQGTVRFSRLGRRATLRTRSGKQIGARVHFYHDISPVAPEELEMEPLLPPTSEPLYDIYAESDFLQPLDSDVPAAPRGTLSLADTAVSASTASTLRGATTVPLSGGVDVPVYTGPDIDPSVGPGMGPLVPVIPAIPSSVYIVGGDYYLLPSYVLWPKRRKRVHYFFADGYVAA</sequence>
<gene>
    <name evidence="1" type="primary">L2</name>
</gene>
<proteinExistence type="inferred from homology"/>
<reference key="1">
    <citation type="journal article" date="1990" name="Virus Res.">
        <title>A comparative sequence analysis of two human papillomavirus (HPV) types 2a and 57.</title>
        <authorList>
            <person name="Hirsch-Behnam A."/>
            <person name="Delius H."/>
            <person name="de Villiers E.M."/>
        </authorList>
    </citation>
    <scope>NUCLEOTIDE SEQUENCE [GENOMIC DNA]</scope>
</reference>
<comment type="function">
    <text evidence="1">Minor protein of the capsid that localizes along the inner surface of the virion, within the central cavities beneath the L1 pentamers. Plays a role in capsid stabilization through interaction with the major capsid protein L1. Once the virion enters the host cell, L2 escorts the genomic DNA into the nucleus by promoting escape from the endosomal compartments and traffic through the host Golgi network. Mechanistically, the C-terminus of L2 possesses a cell-penetrating peptide that protudes from the host endosome, interacts with host cytoplasmic retromer cargo and thereby mediates the capsid delivery to the host trans-Golgi network. Plays a role through its interaction with host dynein in the intracellular microtubule-dependent transport of viral capsid toward the nucleus. Mediates the viral genome import into the nucleus through binding to host importins. Once within the nucleus, L2 localizes viral genomes to host PML bodies in order to activate early gene expression for establishment of infection. Later on, promotes late gene expression by interacting with the viral E2 protein and by inhibiting its transcriptional activation functions. During virion assembly, encapsidates the genome by direct interaction with the viral DNA.</text>
</comment>
<comment type="subunit">
    <text evidence="1">Interacts with major capsid protein L1. Interacts with E2; this interaction inhibits E2 transcriptional activity but not the DNA replication function E2. Interacts with host GADD45GIP1. Interacts with host HSPA8; this interaction is required for L2 nuclear translocation. Interacts with host importins KPNB2 and KPNB3. Forms a complex with importin alpha2-beta1 heterodimers via interaction with the importin alpha2 adapter. Interacts with host DYNLT1; this interaction is essential for virus intracellular transport during entry. Interacts (via C-terminus) with host retromer subunits VPS35 and VPS29.</text>
</comment>
<comment type="subcellular location">
    <subcellularLocation>
        <location evidence="1">Virion</location>
    </subcellularLocation>
    <subcellularLocation>
        <location evidence="1">Host nucleus</location>
    </subcellularLocation>
    <subcellularLocation>
        <location evidence="1">Host early endosome</location>
    </subcellularLocation>
    <subcellularLocation>
        <location evidence="1">Host Golgi apparatus</location>
    </subcellularLocation>
</comment>
<comment type="PTM">
    <text evidence="1">Highly phosphorylated.</text>
</comment>
<comment type="similarity">
    <text evidence="1">Belongs to the papillomaviridae L2 protein family.</text>
</comment>
<organism>
    <name type="scientific">Human papillomavirus 57</name>
    <dbReference type="NCBI Taxonomy" id="333753"/>
    <lineage>
        <taxon>Viruses</taxon>
        <taxon>Monodnaviria</taxon>
        <taxon>Shotokuvirae</taxon>
        <taxon>Cossaviricota</taxon>
        <taxon>Papovaviricetes</taxon>
        <taxon>Zurhausenvirales</taxon>
        <taxon>Papillomaviridae</taxon>
        <taxon>Firstpapillomavirinae</taxon>
        <taxon>Alphapapillomavirus</taxon>
        <taxon>Alphapapillomavirus 4</taxon>
    </lineage>
</organism>